<accession>Q4R327</accession>
<protein>
    <recommendedName>
        <fullName>F-box only protein 24</fullName>
    </recommendedName>
</protein>
<evidence type="ECO:0000250" key="1"/>
<evidence type="ECO:0000255" key="2">
    <source>
        <dbReference type="PROSITE-ProRule" id="PRU00080"/>
    </source>
</evidence>
<keyword id="KW-1185">Reference proteome</keyword>
<keyword id="KW-0833">Ubl conjugation pathway</keyword>
<gene>
    <name type="primary">FBXO24</name>
    <name type="ORF">QtsA-20044</name>
</gene>
<sequence length="580" mass="64919">MGEKAVPLLRRRRVKRSCPSCGPELGVEEKKGKGNPISIQLFPPELVEHIISFLPVRDLVALGQTCRYFHEVCDAEGVWRRICRRLSPRLRDQGSGVRPWKRAAILNYTKGLYFQAFGGRRRCLSKSVAPLLAHGYRRFLPTKDHVFILDYVGTLFFLKNALVSTLGQMQWKRACRYVVLCRGAKDFASDPRCDTVYRKYLYVLATREQQEVVGTTSSRACDCVEVYLQSSGQRVFKMTFHHSMTFKQIVLVGQETQRALLLLTEEGKIYSLVVNETQLDQPRSYTVQLALRKVSHYLPHLRVACMTSNQSSTLYVTDQGGVYFEVHTPGVYRDLFGTLQAFDPLDQQMPLALSLPAKILFCALGYNHLGLVDEFGRIFMQGNNRYGQLGTGDKMDRGEPTQVRYLQRPITLWCGLNHSLVLSQSSEFSKELLGCGCGAGGRLPGWPKGSASFVKLQVKVPLCACALCATRECLYILSSHDIEQHTPYRDLPASRVVGIPEPSLGTGAPQDPGGTAQACEEYLSQIHSCHTLQDRMEKMKEIVGWMPLMAAQKDFFWEALDMLQKAEGGGGGVGPPASET</sequence>
<reference key="1">
    <citation type="submission" date="2005-06" db="EMBL/GenBank/DDBJ databases">
        <title>DNA sequences of macaque genes expressed in brain or testis and its evolutionary implications.</title>
        <authorList>
            <consortium name="International consortium for macaque cDNA sequencing and analysis"/>
        </authorList>
    </citation>
    <scope>NUCLEOTIDE SEQUENCE [LARGE SCALE MRNA]</scope>
    <source>
        <tissue>Testis</tissue>
    </source>
</reference>
<comment type="function">
    <text evidence="1">Substrate-recognition component of the SCF (SKP1-CUL1-F-box protein)-type E3 ubiquitin ligase complex.</text>
</comment>
<comment type="subunit">
    <text evidence="1">Directly interacts with SKP1 and CUL1.</text>
</comment>
<feature type="chain" id="PRO_0000248187" description="F-box only protein 24">
    <location>
        <begin position="1"/>
        <end position="580"/>
    </location>
</feature>
<feature type="domain" description="F-box" evidence="2">
    <location>
        <begin position="36"/>
        <end position="82"/>
    </location>
</feature>
<feature type="repeat" description="RCC1">
    <location>
        <begin position="376"/>
        <end position="425"/>
    </location>
</feature>
<dbReference type="EMBL" id="AB179441">
    <property type="protein sequence ID" value="BAE02492.1"/>
    <property type="molecule type" value="mRNA"/>
</dbReference>
<dbReference type="RefSeq" id="NP_001270026.1">
    <property type="nucleotide sequence ID" value="NM_001283097.1"/>
</dbReference>
<dbReference type="RefSeq" id="XP_045245490.1">
    <property type="nucleotide sequence ID" value="XM_045389555.2"/>
</dbReference>
<dbReference type="SMR" id="Q4R327"/>
<dbReference type="STRING" id="9541.ENSMFAP00000036319"/>
<dbReference type="Ensembl" id="ENSMFAT00000094116.1">
    <property type="protein sequence ID" value="ENSMFAP00000055439.1"/>
    <property type="gene ID" value="ENSMFAG00000034514.2"/>
</dbReference>
<dbReference type="GeneID" id="101865732"/>
<dbReference type="eggNOG" id="KOG0274">
    <property type="taxonomic scope" value="Eukaryota"/>
</dbReference>
<dbReference type="GeneTree" id="ENSGT00390000017455"/>
<dbReference type="Proteomes" id="UP000233100">
    <property type="component" value="Chromosome 3"/>
</dbReference>
<dbReference type="Bgee" id="ENSMFAG00000034514">
    <property type="expression patterns" value="Expressed in multicellular organism"/>
</dbReference>
<dbReference type="CDD" id="cd22098">
    <property type="entry name" value="F-box_FBXO24"/>
    <property type="match status" value="1"/>
</dbReference>
<dbReference type="Gene3D" id="1.20.1280.50">
    <property type="match status" value="1"/>
</dbReference>
<dbReference type="Gene3D" id="2.130.10.30">
    <property type="entry name" value="Regulator of chromosome condensation 1/beta-lactamase-inhibitor protein II"/>
    <property type="match status" value="1"/>
</dbReference>
<dbReference type="InterPro" id="IPR036047">
    <property type="entry name" value="F-box-like_dom_sf"/>
</dbReference>
<dbReference type="InterPro" id="IPR001810">
    <property type="entry name" value="F-box_dom"/>
</dbReference>
<dbReference type="InterPro" id="IPR052866">
    <property type="entry name" value="F-box_protein_24"/>
</dbReference>
<dbReference type="InterPro" id="IPR009091">
    <property type="entry name" value="RCC1/BLIP-II"/>
</dbReference>
<dbReference type="InterPro" id="IPR000408">
    <property type="entry name" value="Reg_chr_condens"/>
</dbReference>
<dbReference type="PANTHER" id="PTHR47004">
    <property type="entry name" value="F-BOX ONLY PROTEIN 24"/>
    <property type="match status" value="1"/>
</dbReference>
<dbReference type="PANTHER" id="PTHR47004:SF1">
    <property type="entry name" value="F-BOX ONLY PROTEIN 24"/>
    <property type="match status" value="1"/>
</dbReference>
<dbReference type="Pfam" id="PF12937">
    <property type="entry name" value="F-box-like"/>
    <property type="match status" value="1"/>
</dbReference>
<dbReference type="Pfam" id="PF00415">
    <property type="entry name" value="RCC1"/>
    <property type="match status" value="1"/>
</dbReference>
<dbReference type="SMART" id="SM00256">
    <property type="entry name" value="FBOX"/>
    <property type="match status" value="1"/>
</dbReference>
<dbReference type="SUPFAM" id="SSF81383">
    <property type="entry name" value="F-box domain"/>
    <property type="match status" value="1"/>
</dbReference>
<dbReference type="SUPFAM" id="SSF50985">
    <property type="entry name" value="RCC1/BLIP-II"/>
    <property type="match status" value="1"/>
</dbReference>
<dbReference type="PROSITE" id="PS50181">
    <property type="entry name" value="FBOX"/>
    <property type="match status" value="1"/>
</dbReference>
<dbReference type="PROSITE" id="PS50012">
    <property type="entry name" value="RCC1_3"/>
    <property type="match status" value="1"/>
</dbReference>
<organism>
    <name type="scientific">Macaca fascicularis</name>
    <name type="common">Crab-eating macaque</name>
    <name type="synonym">Cynomolgus monkey</name>
    <dbReference type="NCBI Taxonomy" id="9541"/>
    <lineage>
        <taxon>Eukaryota</taxon>
        <taxon>Metazoa</taxon>
        <taxon>Chordata</taxon>
        <taxon>Craniata</taxon>
        <taxon>Vertebrata</taxon>
        <taxon>Euteleostomi</taxon>
        <taxon>Mammalia</taxon>
        <taxon>Eutheria</taxon>
        <taxon>Euarchontoglires</taxon>
        <taxon>Primates</taxon>
        <taxon>Haplorrhini</taxon>
        <taxon>Catarrhini</taxon>
        <taxon>Cercopithecidae</taxon>
        <taxon>Cercopithecinae</taxon>
        <taxon>Macaca</taxon>
    </lineage>
</organism>
<proteinExistence type="evidence at transcript level"/>
<name>FBX24_MACFA</name>